<dbReference type="EC" id="4.2.1.96" evidence="1"/>
<dbReference type="EMBL" id="BA000032">
    <property type="protein sequence ID" value="BAC61920.1"/>
    <property type="molecule type" value="Genomic_DNA"/>
</dbReference>
<dbReference type="RefSeq" id="NP_800087.1">
    <property type="nucleotide sequence ID" value="NC_004605.1"/>
</dbReference>
<dbReference type="RefSeq" id="WP_005482617.1">
    <property type="nucleotide sequence ID" value="NC_004605.1"/>
</dbReference>
<dbReference type="SMR" id="Q87IM9"/>
<dbReference type="GeneID" id="1191265"/>
<dbReference type="KEGG" id="vpa:VPA0577"/>
<dbReference type="PATRIC" id="fig|223926.6.peg.3519"/>
<dbReference type="eggNOG" id="COG2154">
    <property type="taxonomic scope" value="Bacteria"/>
</dbReference>
<dbReference type="HOGENOM" id="CLU_081974_2_2_6"/>
<dbReference type="Proteomes" id="UP000002493">
    <property type="component" value="Chromosome 2"/>
</dbReference>
<dbReference type="GO" id="GO:0008124">
    <property type="term" value="F:4-alpha-hydroxytetrahydrobiopterin dehydratase activity"/>
    <property type="evidence" value="ECO:0007669"/>
    <property type="project" value="UniProtKB-UniRule"/>
</dbReference>
<dbReference type="GO" id="GO:0006729">
    <property type="term" value="P:tetrahydrobiopterin biosynthetic process"/>
    <property type="evidence" value="ECO:0007669"/>
    <property type="project" value="InterPro"/>
</dbReference>
<dbReference type="CDD" id="cd00913">
    <property type="entry name" value="PCD_DCoH_subfamily_a"/>
    <property type="match status" value="1"/>
</dbReference>
<dbReference type="Gene3D" id="3.30.1360.20">
    <property type="entry name" value="Transcriptional coactivator/pterin dehydratase"/>
    <property type="match status" value="1"/>
</dbReference>
<dbReference type="HAMAP" id="MF_00434">
    <property type="entry name" value="Pterin_4_alpha"/>
    <property type="match status" value="1"/>
</dbReference>
<dbReference type="InterPro" id="IPR036428">
    <property type="entry name" value="PCD_sf"/>
</dbReference>
<dbReference type="InterPro" id="IPR050376">
    <property type="entry name" value="Pterin-4-alpha-carb_dehyd"/>
</dbReference>
<dbReference type="InterPro" id="IPR001533">
    <property type="entry name" value="Pterin_deHydtase"/>
</dbReference>
<dbReference type="NCBIfam" id="NF002016">
    <property type="entry name" value="PRK00823.1-1"/>
    <property type="match status" value="1"/>
</dbReference>
<dbReference type="PANTHER" id="PTHR42805">
    <property type="entry name" value="PTERIN-4-ALPHA-CARBINOLAMINE DEHYDRATASE-RELATED"/>
    <property type="match status" value="1"/>
</dbReference>
<dbReference type="PANTHER" id="PTHR42805:SF1">
    <property type="entry name" value="PTERIN-4-ALPHA-CARBINOLAMINE DEHYDRATASE-RELATED"/>
    <property type="match status" value="1"/>
</dbReference>
<dbReference type="Pfam" id="PF01329">
    <property type="entry name" value="Pterin_4a"/>
    <property type="match status" value="1"/>
</dbReference>
<dbReference type="SUPFAM" id="SSF55248">
    <property type="entry name" value="PCD-like"/>
    <property type="match status" value="1"/>
</dbReference>
<gene>
    <name type="ordered locus">VPA0577</name>
</gene>
<organism>
    <name type="scientific">Vibrio parahaemolyticus serotype O3:K6 (strain RIMD 2210633)</name>
    <dbReference type="NCBI Taxonomy" id="223926"/>
    <lineage>
        <taxon>Bacteria</taxon>
        <taxon>Pseudomonadati</taxon>
        <taxon>Pseudomonadota</taxon>
        <taxon>Gammaproteobacteria</taxon>
        <taxon>Vibrionales</taxon>
        <taxon>Vibrionaceae</taxon>
        <taxon>Vibrio</taxon>
    </lineage>
</organism>
<reference key="1">
    <citation type="journal article" date="2003" name="Lancet">
        <title>Genome sequence of Vibrio parahaemolyticus: a pathogenic mechanism distinct from that of V. cholerae.</title>
        <authorList>
            <person name="Makino K."/>
            <person name="Oshima K."/>
            <person name="Kurokawa K."/>
            <person name="Yokoyama K."/>
            <person name="Uda T."/>
            <person name="Tagomori K."/>
            <person name="Iijima Y."/>
            <person name="Najima M."/>
            <person name="Nakano M."/>
            <person name="Yamashita A."/>
            <person name="Kubota Y."/>
            <person name="Kimura S."/>
            <person name="Yasunaga T."/>
            <person name="Honda T."/>
            <person name="Shinagawa H."/>
            <person name="Hattori M."/>
            <person name="Iida T."/>
        </authorList>
    </citation>
    <scope>NUCLEOTIDE SEQUENCE [LARGE SCALE GENOMIC DNA]</scope>
    <source>
        <strain>RIMD 2210633</strain>
    </source>
</reference>
<name>PHS_VIBPA</name>
<protein>
    <recommendedName>
        <fullName evidence="1">Putative pterin-4-alpha-carbinolamine dehydratase</fullName>
        <shortName evidence="1">PHS</shortName>
        <ecNumber evidence="1">4.2.1.96</ecNumber>
    </recommendedName>
    <alternativeName>
        <fullName evidence="1">4-alpha-hydroxy-tetrahydropterin dehydratase</fullName>
    </alternativeName>
    <alternativeName>
        <fullName evidence="1">Pterin carbinolamine dehydratase</fullName>
        <shortName evidence="1">PCD</shortName>
    </alternativeName>
</protein>
<accession>Q87IM9</accession>
<evidence type="ECO:0000255" key="1">
    <source>
        <dbReference type="HAMAP-Rule" id="MF_00434"/>
    </source>
</evidence>
<sequence>MLNEQKCEACSFDAIALTKEEQQSLLLQLSDWHLIERDDIPQLEKVYKFKNFKQAWAFSNKIAELAEEEFHHPSILLEWGKVTVTWWSHSIKGLHKNDFICASKCDALVLSE</sequence>
<proteinExistence type="inferred from homology"/>
<keyword id="KW-0456">Lyase</keyword>
<comment type="catalytic activity">
    <reaction evidence="1">
        <text>(4aS,6R)-4a-hydroxy-L-erythro-5,6,7,8-tetrahydrobiopterin = (6R)-L-erythro-6,7-dihydrobiopterin + H2O</text>
        <dbReference type="Rhea" id="RHEA:11920"/>
        <dbReference type="ChEBI" id="CHEBI:15377"/>
        <dbReference type="ChEBI" id="CHEBI:15642"/>
        <dbReference type="ChEBI" id="CHEBI:43120"/>
        <dbReference type="EC" id="4.2.1.96"/>
    </reaction>
</comment>
<comment type="similarity">
    <text evidence="1">Belongs to the pterin-4-alpha-carbinolamine dehydratase family.</text>
</comment>
<feature type="chain" id="PRO_0000063102" description="Putative pterin-4-alpha-carbinolamine dehydratase">
    <location>
        <begin position="1"/>
        <end position="112"/>
    </location>
</feature>